<protein>
    <recommendedName>
        <fullName evidence="1">UPF0297 protein LACR_0137</fullName>
    </recommendedName>
</protein>
<feature type="chain" id="PRO_0000289306" description="UPF0297 protein LACR_0137">
    <location>
        <begin position="1"/>
        <end position="88"/>
    </location>
</feature>
<accession>Q032W4</accession>
<evidence type="ECO:0000255" key="1">
    <source>
        <dbReference type="HAMAP-Rule" id="MF_01507"/>
    </source>
</evidence>
<organism>
    <name type="scientific">Lactococcus lactis subsp. cremoris (strain SK11)</name>
    <dbReference type="NCBI Taxonomy" id="272622"/>
    <lineage>
        <taxon>Bacteria</taxon>
        <taxon>Bacillati</taxon>
        <taxon>Bacillota</taxon>
        <taxon>Bacilli</taxon>
        <taxon>Lactobacillales</taxon>
        <taxon>Streptococcaceae</taxon>
        <taxon>Lactococcus</taxon>
        <taxon>Lactococcus cremoris subsp. cremoris</taxon>
    </lineage>
</organism>
<reference key="1">
    <citation type="journal article" date="2006" name="Proc. Natl. Acad. Sci. U.S.A.">
        <title>Comparative genomics of the lactic acid bacteria.</title>
        <authorList>
            <person name="Makarova K.S."/>
            <person name="Slesarev A."/>
            <person name="Wolf Y.I."/>
            <person name="Sorokin A."/>
            <person name="Mirkin B."/>
            <person name="Koonin E.V."/>
            <person name="Pavlov A."/>
            <person name="Pavlova N."/>
            <person name="Karamychev V."/>
            <person name="Polouchine N."/>
            <person name="Shakhova V."/>
            <person name="Grigoriev I."/>
            <person name="Lou Y."/>
            <person name="Rohksar D."/>
            <person name="Lucas S."/>
            <person name="Huang K."/>
            <person name="Goodstein D.M."/>
            <person name="Hawkins T."/>
            <person name="Plengvidhya V."/>
            <person name="Welker D."/>
            <person name="Hughes J."/>
            <person name="Goh Y."/>
            <person name="Benson A."/>
            <person name="Baldwin K."/>
            <person name="Lee J.-H."/>
            <person name="Diaz-Muniz I."/>
            <person name="Dosti B."/>
            <person name="Smeianov V."/>
            <person name="Wechter W."/>
            <person name="Barabote R."/>
            <person name="Lorca G."/>
            <person name="Altermann E."/>
            <person name="Barrangou R."/>
            <person name="Ganesan B."/>
            <person name="Xie Y."/>
            <person name="Rawsthorne H."/>
            <person name="Tamir D."/>
            <person name="Parker C."/>
            <person name="Breidt F."/>
            <person name="Broadbent J.R."/>
            <person name="Hutkins R."/>
            <person name="O'Sullivan D."/>
            <person name="Steele J."/>
            <person name="Unlu G."/>
            <person name="Saier M.H. Jr."/>
            <person name="Klaenhammer T."/>
            <person name="Richardson P."/>
            <person name="Kozyavkin S."/>
            <person name="Weimer B.C."/>
            <person name="Mills D.A."/>
        </authorList>
    </citation>
    <scope>NUCLEOTIDE SEQUENCE [LARGE SCALE GENOMIC DNA]</scope>
    <source>
        <strain>SK11</strain>
    </source>
</reference>
<proteinExistence type="inferred from homology"/>
<comment type="similarity">
    <text evidence="1">Belongs to the UPF0297 family.</text>
</comment>
<sequence length="88" mass="10169">MSFTDETVRFEFGDSDKKEIGETLVDVYNVLEAKGYNPINQIVGYVLSGDPAYIPRHDDARNKIRRFDRDDIVEELIKNYLKDNGVNL</sequence>
<dbReference type="EMBL" id="CP000425">
    <property type="protein sequence ID" value="ABJ71758.1"/>
    <property type="molecule type" value="Genomic_DNA"/>
</dbReference>
<dbReference type="RefSeq" id="WP_003131820.1">
    <property type="nucleotide sequence ID" value="NC_008527.1"/>
</dbReference>
<dbReference type="SMR" id="Q032W4"/>
<dbReference type="KEGG" id="llc:LACR_0137"/>
<dbReference type="HOGENOM" id="CLU_162466_0_0_9"/>
<dbReference type="Proteomes" id="UP000000240">
    <property type="component" value="Chromosome"/>
</dbReference>
<dbReference type="HAMAP" id="MF_01507">
    <property type="entry name" value="UPF0297"/>
    <property type="match status" value="1"/>
</dbReference>
<dbReference type="InterPro" id="IPR009309">
    <property type="entry name" value="IreB"/>
</dbReference>
<dbReference type="NCBIfam" id="NF003997">
    <property type="entry name" value="PRK05473.1"/>
    <property type="match status" value="1"/>
</dbReference>
<dbReference type="PANTHER" id="PTHR40067">
    <property type="entry name" value="UPF0297 PROTEIN YRZL"/>
    <property type="match status" value="1"/>
</dbReference>
<dbReference type="PANTHER" id="PTHR40067:SF1">
    <property type="entry name" value="UPF0297 PROTEIN YRZL"/>
    <property type="match status" value="1"/>
</dbReference>
<dbReference type="Pfam" id="PF06135">
    <property type="entry name" value="IreB"/>
    <property type="match status" value="1"/>
</dbReference>
<dbReference type="PIRSF" id="PIRSF037258">
    <property type="entry name" value="DUF965_bac"/>
    <property type="match status" value="1"/>
</dbReference>
<name>Y137_LACLS</name>
<gene>
    <name type="ordered locus">LACR_0137</name>
</gene>